<sequence length="149" mass="16900">MDQQAQPQFQIQKVYVKDLSFSIPNSDKIWTTNWKPELHTDLKVEATKLPEENTYETVLTLEVKVENDGMVAFEAEVKQAGIFTVANMQEAQIEHAKKAFCPNILYHYAREAISDLVISGGFPQLCLSAVNFDAMYQDSLKESADSKQH</sequence>
<accession>Q2A630</accession>
<reference key="1">
    <citation type="submission" date="2006-03" db="EMBL/GenBank/DDBJ databases">
        <title>Complete genome sequence of Francisella tularensis LVS (Live Vaccine Strain).</title>
        <authorList>
            <person name="Chain P."/>
            <person name="Larimer F."/>
            <person name="Land M."/>
            <person name="Stilwagen S."/>
            <person name="Larsson P."/>
            <person name="Bearden S."/>
            <person name="Chu M."/>
            <person name="Oyston P."/>
            <person name="Forsman M."/>
            <person name="Andersson S."/>
            <person name="Lindler L."/>
            <person name="Titball R."/>
            <person name="Garcia E."/>
        </authorList>
    </citation>
    <scope>NUCLEOTIDE SEQUENCE [LARGE SCALE GENOMIC DNA]</scope>
    <source>
        <strain>LVS</strain>
    </source>
</reference>
<organism>
    <name type="scientific">Francisella tularensis subsp. holarctica (strain LVS)</name>
    <dbReference type="NCBI Taxonomy" id="376619"/>
    <lineage>
        <taxon>Bacteria</taxon>
        <taxon>Pseudomonadati</taxon>
        <taxon>Pseudomonadota</taxon>
        <taxon>Gammaproteobacteria</taxon>
        <taxon>Thiotrichales</taxon>
        <taxon>Francisellaceae</taxon>
        <taxon>Francisella</taxon>
    </lineage>
</organism>
<protein>
    <recommendedName>
        <fullName evidence="1">Protein-export protein SecB 1</fullName>
    </recommendedName>
</protein>
<keyword id="KW-0143">Chaperone</keyword>
<keyword id="KW-0963">Cytoplasm</keyword>
<keyword id="KW-0653">Protein transport</keyword>
<keyword id="KW-1185">Reference proteome</keyword>
<keyword id="KW-0811">Translocation</keyword>
<keyword id="KW-0813">Transport</keyword>
<proteinExistence type="inferred from homology"/>
<evidence type="ECO:0000255" key="1">
    <source>
        <dbReference type="HAMAP-Rule" id="MF_00821"/>
    </source>
</evidence>
<dbReference type="EMBL" id="AM233362">
    <property type="protein sequence ID" value="CAJ78452.1"/>
    <property type="molecule type" value="Genomic_DNA"/>
</dbReference>
<dbReference type="SMR" id="Q2A630"/>
<dbReference type="KEGG" id="ftl:FTL_0011"/>
<dbReference type="Proteomes" id="UP000001944">
    <property type="component" value="Chromosome"/>
</dbReference>
<dbReference type="GO" id="GO:0005737">
    <property type="term" value="C:cytoplasm"/>
    <property type="evidence" value="ECO:0007669"/>
    <property type="project" value="UniProtKB-SubCell"/>
</dbReference>
<dbReference type="GO" id="GO:0051082">
    <property type="term" value="F:unfolded protein binding"/>
    <property type="evidence" value="ECO:0007669"/>
    <property type="project" value="InterPro"/>
</dbReference>
<dbReference type="GO" id="GO:0006457">
    <property type="term" value="P:protein folding"/>
    <property type="evidence" value="ECO:0007669"/>
    <property type="project" value="UniProtKB-UniRule"/>
</dbReference>
<dbReference type="GO" id="GO:0051262">
    <property type="term" value="P:protein tetramerization"/>
    <property type="evidence" value="ECO:0007669"/>
    <property type="project" value="InterPro"/>
</dbReference>
<dbReference type="GO" id="GO:0015031">
    <property type="term" value="P:protein transport"/>
    <property type="evidence" value="ECO:0007669"/>
    <property type="project" value="UniProtKB-UniRule"/>
</dbReference>
<dbReference type="Gene3D" id="3.10.420.10">
    <property type="entry name" value="SecB-like"/>
    <property type="match status" value="1"/>
</dbReference>
<dbReference type="HAMAP" id="MF_00821">
    <property type="entry name" value="SecB"/>
    <property type="match status" value="1"/>
</dbReference>
<dbReference type="InterPro" id="IPR003708">
    <property type="entry name" value="SecB"/>
</dbReference>
<dbReference type="InterPro" id="IPR035958">
    <property type="entry name" value="SecB-like_sf"/>
</dbReference>
<dbReference type="NCBIfam" id="NF004393">
    <property type="entry name" value="PRK05751.1-4"/>
    <property type="match status" value="1"/>
</dbReference>
<dbReference type="NCBIfam" id="NF009590">
    <property type="entry name" value="PRK13031.1"/>
    <property type="match status" value="1"/>
</dbReference>
<dbReference type="NCBIfam" id="TIGR00809">
    <property type="entry name" value="secB"/>
    <property type="match status" value="1"/>
</dbReference>
<dbReference type="PANTHER" id="PTHR36918">
    <property type="match status" value="1"/>
</dbReference>
<dbReference type="PANTHER" id="PTHR36918:SF1">
    <property type="entry name" value="PROTEIN-EXPORT PROTEIN SECB"/>
    <property type="match status" value="1"/>
</dbReference>
<dbReference type="Pfam" id="PF02556">
    <property type="entry name" value="SecB"/>
    <property type="match status" value="1"/>
</dbReference>
<dbReference type="PRINTS" id="PR01594">
    <property type="entry name" value="SECBCHAPRONE"/>
</dbReference>
<dbReference type="SUPFAM" id="SSF54611">
    <property type="entry name" value="SecB-like"/>
    <property type="match status" value="1"/>
</dbReference>
<name>SECB1_FRATH</name>
<gene>
    <name evidence="1" type="primary">secB1</name>
    <name type="ordered locus">FTL_0011</name>
</gene>
<feature type="chain" id="PRO_0000318229" description="Protein-export protein SecB 1">
    <location>
        <begin position="1"/>
        <end position="149"/>
    </location>
</feature>
<comment type="function">
    <text evidence="1">One of the proteins required for the normal export of preproteins out of the cell cytoplasm. It is a molecular chaperone that binds to a subset of precursor proteins, maintaining them in a translocation-competent state. It also specifically binds to its receptor SecA.</text>
</comment>
<comment type="subunit">
    <text evidence="1">Homotetramer, a dimer of dimers. One homotetramer interacts with 1 SecA dimer.</text>
</comment>
<comment type="subcellular location">
    <subcellularLocation>
        <location evidence="1">Cytoplasm</location>
    </subcellularLocation>
</comment>
<comment type="similarity">
    <text evidence="1">Belongs to the SecB family.</text>
</comment>